<accession>A0KP08</accession>
<evidence type="ECO:0000255" key="1">
    <source>
        <dbReference type="HAMAP-Rule" id="MF_00158"/>
    </source>
</evidence>
<proteinExistence type="inferred from homology"/>
<name>PANC_AERHH</name>
<dbReference type="EC" id="6.3.2.1" evidence="1"/>
<dbReference type="EMBL" id="CP000462">
    <property type="protein sequence ID" value="ABK36931.1"/>
    <property type="molecule type" value="Genomic_DNA"/>
</dbReference>
<dbReference type="RefSeq" id="WP_011707282.1">
    <property type="nucleotide sequence ID" value="NC_008570.1"/>
</dbReference>
<dbReference type="RefSeq" id="YP_858009.1">
    <property type="nucleotide sequence ID" value="NC_008570.1"/>
</dbReference>
<dbReference type="SMR" id="A0KP08"/>
<dbReference type="STRING" id="380703.AHA_3539"/>
<dbReference type="EnsemblBacteria" id="ABK36931">
    <property type="protein sequence ID" value="ABK36931"/>
    <property type="gene ID" value="AHA_3539"/>
</dbReference>
<dbReference type="GeneID" id="4488711"/>
<dbReference type="KEGG" id="aha:AHA_3539"/>
<dbReference type="PATRIC" id="fig|380703.7.peg.3525"/>
<dbReference type="eggNOG" id="COG0414">
    <property type="taxonomic scope" value="Bacteria"/>
</dbReference>
<dbReference type="HOGENOM" id="CLU_047148_0_0_6"/>
<dbReference type="OrthoDB" id="9773087at2"/>
<dbReference type="UniPathway" id="UPA00028">
    <property type="reaction ID" value="UER00005"/>
</dbReference>
<dbReference type="Proteomes" id="UP000000756">
    <property type="component" value="Chromosome"/>
</dbReference>
<dbReference type="GO" id="GO:0005829">
    <property type="term" value="C:cytosol"/>
    <property type="evidence" value="ECO:0007669"/>
    <property type="project" value="TreeGrafter"/>
</dbReference>
<dbReference type="GO" id="GO:0005524">
    <property type="term" value="F:ATP binding"/>
    <property type="evidence" value="ECO:0007669"/>
    <property type="project" value="UniProtKB-KW"/>
</dbReference>
<dbReference type="GO" id="GO:0004592">
    <property type="term" value="F:pantoate-beta-alanine ligase activity"/>
    <property type="evidence" value="ECO:0007669"/>
    <property type="project" value="UniProtKB-UniRule"/>
</dbReference>
<dbReference type="GO" id="GO:0015940">
    <property type="term" value="P:pantothenate biosynthetic process"/>
    <property type="evidence" value="ECO:0007669"/>
    <property type="project" value="UniProtKB-UniRule"/>
</dbReference>
<dbReference type="CDD" id="cd00560">
    <property type="entry name" value="PanC"/>
    <property type="match status" value="1"/>
</dbReference>
<dbReference type="FunFam" id="3.30.1300.10:FF:000001">
    <property type="entry name" value="Pantothenate synthetase"/>
    <property type="match status" value="1"/>
</dbReference>
<dbReference type="FunFam" id="3.40.50.620:FF:000013">
    <property type="entry name" value="Pantothenate synthetase"/>
    <property type="match status" value="1"/>
</dbReference>
<dbReference type="Gene3D" id="3.40.50.620">
    <property type="entry name" value="HUPs"/>
    <property type="match status" value="1"/>
</dbReference>
<dbReference type="Gene3D" id="3.30.1300.10">
    <property type="entry name" value="Pantoate-beta-alanine ligase, C-terminal domain"/>
    <property type="match status" value="1"/>
</dbReference>
<dbReference type="HAMAP" id="MF_00158">
    <property type="entry name" value="PanC"/>
    <property type="match status" value="1"/>
</dbReference>
<dbReference type="InterPro" id="IPR004821">
    <property type="entry name" value="Cyt_trans-like"/>
</dbReference>
<dbReference type="InterPro" id="IPR003721">
    <property type="entry name" value="Pantoate_ligase"/>
</dbReference>
<dbReference type="InterPro" id="IPR042176">
    <property type="entry name" value="Pantoate_ligase_C"/>
</dbReference>
<dbReference type="InterPro" id="IPR014729">
    <property type="entry name" value="Rossmann-like_a/b/a_fold"/>
</dbReference>
<dbReference type="NCBIfam" id="TIGR00125">
    <property type="entry name" value="cyt_tran_rel"/>
    <property type="match status" value="1"/>
</dbReference>
<dbReference type="NCBIfam" id="TIGR00018">
    <property type="entry name" value="panC"/>
    <property type="match status" value="1"/>
</dbReference>
<dbReference type="PANTHER" id="PTHR21299">
    <property type="entry name" value="CYTIDYLATE KINASE/PANTOATE-BETA-ALANINE LIGASE"/>
    <property type="match status" value="1"/>
</dbReference>
<dbReference type="PANTHER" id="PTHR21299:SF1">
    <property type="entry name" value="PANTOATE--BETA-ALANINE LIGASE"/>
    <property type="match status" value="1"/>
</dbReference>
<dbReference type="Pfam" id="PF02569">
    <property type="entry name" value="Pantoate_ligase"/>
    <property type="match status" value="1"/>
</dbReference>
<dbReference type="SUPFAM" id="SSF52374">
    <property type="entry name" value="Nucleotidylyl transferase"/>
    <property type="match status" value="1"/>
</dbReference>
<feature type="chain" id="PRO_0000305386" description="Pantothenate synthetase">
    <location>
        <begin position="1"/>
        <end position="285"/>
    </location>
</feature>
<feature type="active site" description="Proton donor" evidence="1">
    <location>
        <position position="37"/>
    </location>
</feature>
<feature type="binding site" evidence="1">
    <location>
        <begin position="30"/>
        <end position="37"/>
    </location>
    <ligand>
        <name>ATP</name>
        <dbReference type="ChEBI" id="CHEBI:30616"/>
    </ligand>
</feature>
<feature type="binding site" evidence="1">
    <location>
        <position position="61"/>
    </location>
    <ligand>
        <name>(R)-pantoate</name>
        <dbReference type="ChEBI" id="CHEBI:15980"/>
    </ligand>
</feature>
<feature type="binding site" evidence="1">
    <location>
        <position position="61"/>
    </location>
    <ligand>
        <name>beta-alanine</name>
        <dbReference type="ChEBI" id="CHEBI:57966"/>
    </ligand>
</feature>
<feature type="binding site" evidence="1">
    <location>
        <begin position="149"/>
        <end position="152"/>
    </location>
    <ligand>
        <name>ATP</name>
        <dbReference type="ChEBI" id="CHEBI:30616"/>
    </ligand>
</feature>
<feature type="binding site" evidence="1">
    <location>
        <position position="155"/>
    </location>
    <ligand>
        <name>(R)-pantoate</name>
        <dbReference type="ChEBI" id="CHEBI:15980"/>
    </ligand>
</feature>
<feature type="binding site" evidence="1">
    <location>
        <position position="178"/>
    </location>
    <ligand>
        <name>ATP</name>
        <dbReference type="ChEBI" id="CHEBI:30616"/>
    </ligand>
</feature>
<feature type="binding site" evidence="1">
    <location>
        <begin position="186"/>
        <end position="189"/>
    </location>
    <ligand>
        <name>ATP</name>
        <dbReference type="ChEBI" id="CHEBI:30616"/>
    </ligand>
</feature>
<keyword id="KW-0067">ATP-binding</keyword>
<keyword id="KW-0963">Cytoplasm</keyword>
<keyword id="KW-0436">Ligase</keyword>
<keyword id="KW-0547">Nucleotide-binding</keyword>
<keyword id="KW-0566">Pantothenate biosynthesis</keyword>
<keyword id="KW-1185">Reference proteome</keyword>
<organism>
    <name type="scientific">Aeromonas hydrophila subsp. hydrophila (strain ATCC 7966 / DSM 30187 / BCRC 13018 / CCUG 14551 / JCM 1027 / KCTC 2358 / NCIMB 9240 / NCTC 8049)</name>
    <dbReference type="NCBI Taxonomy" id="380703"/>
    <lineage>
        <taxon>Bacteria</taxon>
        <taxon>Pseudomonadati</taxon>
        <taxon>Pseudomonadota</taxon>
        <taxon>Gammaproteobacteria</taxon>
        <taxon>Aeromonadales</taxon>
        <taxon>Aeromonadaceae</taxon>
        <taxon>Aeromonas</taxon>
    </lineage>
</organism>
<gene>
    <name evidence="1" type="primary">panC</name>
    <name type="ordered locus">AHA_3539</name>
</gene>
<comment type="function">
    <text evidence="1">Catalyzes the condensation of pantoate with beta-alanine in an ATP-dependent reaction via a pantoyl-adenylate intermediate.</text>
</comment>
<comment type="catalytic activity">
    <reaction evidence="1">
        <text>(R)-pantoate + beta-alanine + ATP = (R)-pantothenate + AMP + diphosphate + H(+)</text>
        <dbReference type="Rhea" id="RHEA:10912"/>
        <dbReference type="ChEBI" id="CHEBI:15378"/>
        <dbReference type="ChEBI" id="CHEBI:15980"/>
        <dbReference type="ChEBI" id="CHEBI:29032"/>
        <dbReference type="ChEBI" id="CHEBI:30616"/>
        <dbReference type="ChEBI" id="CHEBI:33019"/>
        <dbReference type="ChEBI" id="CHEBI:57966"/>
        <dbReference type="ChEBI" id="CHEBI:456215"/>
        <dbReference type="EC" id="6.3.2.1"/>
    </reaction>
</comment>
<comment type="pathway">
    <text evidence="1">Cofactor biosynthesis; (R)-pantothenate biosynthesis; (R)-pantothenate from (R)-pantoate and beta-alanine: step 1/1.</text>
</comment>
<comment type="subunit">
    <text evidence="1">Homodimer.</text>
</comment>
<comment type="subcellular location">
    <subcellularLocation>
        <location evidence="1">Cytoplasm</location>
    </subcellularLocation>
</comment>
<comment type="miscellaneous">
    <text evidence="1">The reaction proceeds by a bi uni uni bi ping pong mechanism.</text>
</comment>
<comment type="similarity">
    <text evidence="1">Belongs to the pantothenate synthetase family.</text>
</comment>
<reference key="1">
    <citation type="journal article" date="2006" name="J. Bacteriol.">
        <title>Genome sequence of Aeromonas hydrophila ATCC 7966T: jack of all trades.</title>
        <authorList>
            <person name="Seshadri R."/>
            <person name="Joseph S.W."/>
            <person name="Chopra A.K."/>
            <person name="Sha J."/>
            <person name="Shaw J."/>
            <person name="Graf J."/>
            <person name="Haft D.H."/>
            <person name="Wu M."/>
            <person name="Ren Q."/>
            <person name="Rosovitz M.J."/>
            <person name="Madupu R."/>
            <person name="Tallon L."/>
            <person name="Kim M."/>
            <person name="Jin S."/>
            <person name="Vuong H."/>
            <person name="Stine O.C."/>
            <person name="Ali A."/>
            <person name="Horneman A.J."/>
            <person name="Heidelberg J.F."/>
        </authorList>
    </citation>
    <scope>NUCLEOTIDE SEQUENCE [LARGE SCALE GENOMIC DNA]</scope>
    <source>
        <strain>ATCC 7966 / DSM 30187 / BCRC 13018 / CCUG 14551 / JCM 1027 / KCTC 2358 / NCIMB 9240 / NCTC 8049</strain>
    </source>
</reference>
<protein>
    <recommendedName>
        <fullName evidence="1">Pantothenate synthetase</fullName>
        <shortName evidence="1">PS</shortName>
        <ecNumber evidence="1">6.3.2.1</ecNumber>
    </recommendedName>
    <alternativeName>
        <fullName evidence="1">Pantoate--beta-alanine ligase</fullName>
    </alternativeName>
    <alternativeName>
        <fullName evidence="1">Pantoate-activating enzyme</fullName>
    </alternativeName>
</protein>
<sequence length="285" mass="31100">MLVVNNPAALREQIGQWRREGLTIAFVPTMGNLHQGHLTLVKEAHHHADKVVTSIFVNPMQFDKAEDLANYPRTLEQDCAALETAGVDMVFTPTPEIMYPQGLASHTFVEVPGLSGLLEGALRPGHFRGVSTVVTKLFNLVQPDVACFGQKDYQQLALIRKMVADMAMPIQIVGVPTVRAEDGLALSSRNGYLTTAERALAPELARTMNWIAEQIEAGDHHLPSLVAQASQRLDKAGFRTDAIDIVDAATLEAATDQSEQLVILMAAYLGKARLIDNRVVTLARS</sequence>